<name>TIG_ACISJ</name>
<reference key="1">
    <citation type="submission" date="2006-12" db="EMBL/GenBank/DDBJ databases">
        <title>Complete sequence of chromosome 1 of Acidovorax sp. JS42.</title>
        <authorList>
            <person name="Copeland A."/>
            <person name="Lucas S."/>
            <person name="Lapidus A."/>
            <person name="Barry K."/>
            <person name="Detter J.C."/>
            <person name="Glavina del Rio T."/>
            <person name="Dalin E."/>
            <person name="Tice H."/>
            <person name="Pitluck S."/>
            <person name="Chertkov O."/>
            <person name="Brettin T."/>
            <person name="Bruce D."/>
            <person name="Han C."/>
            <person name="Tapia R."/>
            <person name="Gilna P."/>
            <person name="Schmutz J."/>
            <person name="Larimer F."/>
            <person name="Land M."/>
            <person name="Hauser L."/>
            <person name="Kyrpides N."/>
            <person name="Kim E."/>
            <person name="Stahl D."/>
            <person name="Richardson P."/>
        </authorList>
    </citation>
    <scope>NUCLEOTIDE SEQUENCE [LARGE SCALE GENOMIC DNA]</scope>
    <source>
        <strain>JS42</strain>
    </source>
</reference>
<accession>A1W5B5</accession>
<comment type="function">
    <text evidence="1">Involved in protein export. Acts as a chaperone by maintaining the newly synthesized protein in an open conformation. Functions as a peptidyl-prolyl cis-trans isomerase.</text>
</comment>
<comment type="catalytic activity">
    <reaction evidence="1">
        <text>[protein]-peptidylproline (omega=180) = [protein]-peptidylproline (omega=0)</text>
        <dbReference type="Rhea" id="RHEA:16237"/>
        <dbReference type="Rhea" id="RHEA-COMP:10747"/>
        <dbReference type="Rhea" id="RHEA-COMP:10748"/>
        <dbReference type="ChEBI" id="CHEBI:83833"/>
        <dbReference type="ChEBI" id="CHEBI:83834"/>
        <dbReference type="EC" id="5.2.1.8"/>
    </reaction>
</comment>
<comment type="subcellular location">
    <subcellularLocation>
        <location>Cytoplasm</location>
    </subcellularLocation>
    <text evidence="1">About half TF is bound to the ribosome near the polypeptide exit tunnel while the other half is free in the cytoplasm.</text>
</comment>
<comment type="domain">
    <text evidence="1">Consists of 3 domains; the N-terminus binds the ribosome, the middle domain has PPIase activity, while the C-terminus has intrinsic chaperone activity on its own.</text>
</comment>
<comment type="similarity">
    <text evidence="1">Belongs to the FKBP-type PPIase family. Tig subfamily.</text>
</comment>
<evidence type="ECO:0000255" key="1">
    <source>
        <dbReference type="HAMAP-Rule" id="MF_00303"/>
    </source>
</evidence>
<feature type="chain" id="PRO_1000022637" description="Trigger factor">
    <location>
        <begin position="1"/>
        <end position="436"/>
    </location>
</feature>
<feature type="domain" description="PPIase FKBP-type" evidence="1">
    <location>
        <begin position="163"/>
        <end position="248"/>
    </location>
</feature>
<proteinExistence type="inferred from homology"/>
<dbReference type="EC" id="5.2.1.8" evidence="1"/>
<dbReference type="EMBL" id="CP000539">
    <property type="protein sequence ID" value="ABM41440.1"/>
    <property type="molecule type" value="Genomic_DNA"/>
</dbReference>
<dbReference type="SMR" id="A1W5B5"/>
<dbReference type="STRING" id="232721.Ajs_1208"/>
<dbReference type="KEGG" id="ajs:Ajs_1208"/>
<dbReference type="eggNOG" id="COG0544">
    <property type="taxonomic scope" value="Bacteria"/>
</dbReference>
<dbReference type="HOGENOM" id="CLU_033058_2_0_4"/>
<dbReference type="Proteomes" id="UP000000645">
    <property type="component" value="Chromosome"/>
</dbReference>
<dbReference type="GO" id="GO:0005737">
    <property type="term" value="C:cytoplasm"/>
    <property type="evidence" value="ECO:0007669"/>
    <property type="project" value="UniProtKB-SubCell"/>
</dbReference>
<dbReference type="GO" id="GO:0003755">
    <property type="term" value="F:peptidyl-prolyl cis-trans isomerase activity"/>
    <property type="evidence" value="ECO:0007669"/>
    <property type="project" value="UniProtKB-UniRule"/>
</dbReference>
<dbReference type="GO" id="GO:0044183">
    <property type="term" value="F:protein folding chaperone"/>
    <property type="evidence" value="ECO:0007669"/>
    <property type="project" value="TreeGrafter"/>
</dbReference>
<dbReference type="GO" id="GO:0043022">
    <property type="term" value="F:ribosome binding"/>
    <property type="evidence" value="ECO:0007669"/>
    <property type="project" value="TreeGrafter"/>
</dbReference>
<dbReference type="GO" id="GO:0051083">
    <property type="term" value="P:'de novo' cotranslational protein folding"/>
    <property type="evidence" value="ECO:0007669"/>
    <property type="project" value="TreeGrafter"/>
</dbReference>
<dbReference type="GO" id="GO:0051301">
    <property type="term" value="P:cell division"/>
    <property type="evidence" value="ECO:0007669"/>
    <property type="project" value="UniProtKB-KW"/>
</dbReference>
<dbReference type="GO" id="GO:0061077">
    <property type="term" value="P:chaperone-mediated protein folding"/>
    <property type="evidence" value="ECO:0007669"/>
    <property type="project" value="TreeGrafter"/>
</dbReference>
<dbReference type="GO" id="GO:0015031">
    <property type="term" value="P:protein transport"/>
    <property type="evidence" value="ECO:0007669"/>
    <property type="project" value="UniProtKB-UniRule"/>
</dbReference>
<dbReference type="GO" id="GO:0043335">
    <property type="term" value="P:protein unfolding"/>
    <property type="evidence" value="ECO:0007669"/>
    <property type="project" value="TreeGrafter"/>
</dbReference>
<dbReference type="FunFam" id="3.10.50.40:FF:000001">
    <property type="entry name" value="Trigger factor"/>
    <property type="match status" value="1"/>
</dbReference>
<dbReference type="Gene3D" id="3.10.50.40">
    <property type="match status" value="1"/>
</dbReference>
<dbReference type="Gene3D" id="3.30.70.1050">
    <property type="entry name" value="Trigger factor ribosome-binding domain"/>
    <property type="match status" value="1"/>
</dbReference>
<dbReference type="Gene3D" id="1.10.3120.10">
    <property type="entry name" value="Trigger factor, C-terminal domain"/>
    <property type="match status" value="1"/>
</dbReference>
<dbReference type="HAMAP" id="MF_00303">
    <property type="entry name" value="Trigger_factor_Tig"/>
    <property type="match status" value="1"/>
</dbReference>
<dbReference type="InterPro" id="IPR046357">
    <property type="entry name" value="PPIase_dom_sf"/>
</dbReference>
<dbReference type="InterPro" id="IPR001179">
    <property type="entry name" value="PPIase_FKBP_dom"/>
</dbReference>
<dbReference type="InterPro" id="IPR005215">
    <property type="entry name" value="Trig_fac"/>
</dbReference>
<dbReference type="InterPro" id="IPR008880">
    <property type="entry name" value="Trigger_fac_C"/>
</dbReference>
<dbReference type="InterPro" id="IPR037041">
    <property type="entry name" value="Trigger_fac_C_sf"/>
</dbReference>
<dbReference type="InterPro" id="IPR008881">
    <property type="entry name" value="Trigger_fac_ribosome-bd_bac"/>
</dbReference>
<dbReference type="InterPro" id="IPR036611">
    <property type="entry name" value="Trigger_fac_ribosome-bd_sf"/>
</dbReference>
<dbReference type="InterPro" id="IPR027304">
    <property type="entry name" value="Trigger_fact/SurA_dom_sf"/>
</dbReference>
<dbReference type="NCBIfam" id="TIGR00115">
    <property type="entry name" value="tig"/>
    <property type="match status" value="1"/>
</dbReference>
<dbReference type="PANTHER" id="PTHR30560">
    <property type="entry name" value="TRIGGER FACTOR CHAPERONE AND PEPTIDYL-PROLYL CIS/TRANS ISOMERASE"/>
    <property type="match status" value="1"/>
</dbReference>
<dbReference type="PANTHER" id="PTHR30560:SF3">
    <property type="entry name" value="TRIGGER FACTOR-LIKE PROTEIN TIG, CHLOROPLASTIC"/>
    <property type="match status" value="1"/>
</dbReference>
<dbReference type="Pfam" id="PF00254">
    <property type="entry name" value="FKBP_C"/>
    <property type="match status" value="1"/>
</dbReference>
<dbReference type="Pfam" id="PF05698">
    <property type="entry name" value="Trigger_C"/>
    <property type="match status" value="1"/>
</dbReference>
<dbReference type="Pfam" id="PF05697">
    <property type="entry name" value="Trigger_N"/>
    <property type="match status" value="1"/>
</dbReference>
<dbReference type="PIRSF" id="PIRSF003095">
    <property type="entry name" value="Trigger_factor"/>
    <property type="match status" value="1"/>
</dbReference>
<dbReference type="SUPFAM" id="SSF54534">
    <property type="entry name" value="FKBP-like"/>
    <property type="match status" value="1"/>
</dbReference>
<dbReference type="SUPFAM" id="SSF109998">
    <property type="entry name" value="Triger factor/SurA peptide-binding domain-like"/>
    <property type="match status" value="1"/>
</dbReference>
<dbReference type="SUPFAM" id="SSF102735">
    <property type="entry name" value="Trigger factor ribosome-binding domain"/>
    <property type="match status" value="1"/>
</dbReference>
<dbReference type="PROSITE" id="PS50059">
    <property type="entry name" value="FKBP_PPIASE"/>
    <property type="match status" value="1"/>
</dbReference>
<gene>
    <name evidence="1" type="primary">tig</name>
    <name type="ordered locus">Ajs_1208</name>
</gene>
<protein>
    <recommendedName>
        <fullName evidence="1">Trigger factor</fullName>
        <shortName evidence="1">TF</shortName>
        <ecNumber evidence="1">5.2.1.8</ecNumber>
    </recommendedName>
    <alternativeName>
        <fullName evidence="1">PPIase</fullName>
    </alternativeName>
</protein>
<keyword id="KW-0131">Cell cycle</keyword>
<keyword id="KW-0132">Cell division</keyword>
<keyword id="KW-0143">Chaperone</keyword>
<keyword id="KW-0963">Cytoplasm</keyword>
<keyword id="KW-0413">Isomerase</keyword>
<keyword id="KW-0697">Rotamase</keyword>
<organism>
    <name type="scientific">Acidovorax sp. (strain JS42)</name>
    <dbReference type="NCBI Taxonomy" id="232721"/>
    <lineage>
        <taxon>Bacteria</taxon>
        <taxon>Pseudomonadati</taxon>
        <taxon>Pseudomonadota</taxon>
        <taxon>Betaproteobacteria</taxon>
        <taxon>Burkholderiales</taxon>
        <taxon>Comamonadaceae</taxon>
        <taxon>Acidovorax</taxon>
    </lineage>
</organism>
<sequence length="436" mass="48173">MAVTVETLEKLERKITLSLPLTTIQTEVDARLKRLARTVKMDGFRPGKVPMSVVAQRYGYSVQYEVLNDKVGEAFAQAANEANLRVAGQPRITEKDGAPEGEVTFDAVFEVFPEVKIGDLSTAEVEKLSAEVTDSAIDKTVDILRKQRRTFAQRALAAAAEDGDRVTVDFEGKIDGEPFQGGKAEDFQFLVGEGQMLKEFEDAVRGMKSGESKTFPLAFPEDYHGKDVAGKTADFMVTVKKIEAAHLPEVNEQLAKSLGIADGTVEGLRADIKKNLEREVKFRLLARNKQAVMDALVSKAELDLPNASVQAEIARLLEAARADLKQRGIKDADKAEIPEDVFRPQAERRVRLGLVVAELVRANNLQAKPEQLKAHVDELAASYEKPEDVVRWYFSDRNRLAEVEAVVIENNVTDFVLGQAKVNDKAVSFDELMGQA</sequence>